<organism>
    <name type="scientific">Acidithiobacillus ferrooxidans (strain ATCC 53993 / BNL-5-31)</name>
    <name type="common">Leptospirillum ferrooxidans (ATCC 53993)</name>
    <dbReference type="NCBI Taxonomy" id="380394"/>
    <lineage>
        <taxon>Bacteria</taxon>
        <taxon>Pseudomonadati</taxon>
        <taxon>Pseudomonadota</taxon>
        <taxon>Acidithiobacillia</taxon>
        <taxon>Acidithiobacillales</taxon>
        <taxon>Acidithiobacillaceae</taxon>
        <taxon>Acidithiobacillus</taxon>
    </lineage>
</organism>
<comment type="function">
    <text evidence="1">Catalyzes the ATP-dependent amination of UTP to CTP with either L-glutamine or ammonia as the source of nitrogen. Regulates intracellular CTP levels through interactions with the four ribonucleotide triphosphates.</text>
</comment>
<comment type="catalytic activity">
    <reaction evidence="1">
        <text>UTP + L-glutamine + ATP + H2O = CTP + L-glutamate + ADP + phosphate + 2 H(+)</text>
        <dbReference type="Rhea" id="RHEA:26426"/>
        <dbReference type="ChEBI" id="CHEBI:15377"/>
        <dbReference type="ChEBI" id="CHEBI:15378"/>
        <dbReference type="ChEBI" id="CHEBI:29985"/>
        <dbReference type="ChEBI" id="CHEBI:30616"/>
        <dbReference type="ChEBI" id="CHEBI:37563"/>
        <dbReference type="ChEBI" id="CHEBI:43474"/>
        <dbReference type="ChEBI" id="CHEBI:46398"/>
        <dbReference type="ChEBI" id="CHEBI:58359"/>
        <dbReference type="ChEBI" id="CHEBI:456216"/>
        <dbReference type="EC" id="6.3.4.2"/>
    </reaction>
</comment>
<comment type="catalytic activity">
    <reaction evidence="1">
        <text>L-glutamine + H2O = L-glutamate + NH4(+)</text>
        <dbReference type="Rhea" id="RHEA:15889"/>
        <dbReference type="ChEBI" id="CHEBI:15377"/>
        <dbReference type="ChEBI" id="CHEBI:28938"/>
        <dbReference type="ChEBI" id="CHEBI:29985"/>
        <dbReference type="ChEBI" id="CHEBI:58359"/>
    </reaction>
</comment>
<comment type="catalytic activity">
    <reaction evidence="1">
        <text>UTP + NH4(+) + ATP = CTP + ADP + phosphate + 2 H(+)</text>
        <dbReference type="Rhea" id="RHEA:16597"/>
        <dbReference type="ChEBI" id="CHEBI:15378"/>
        <dbReference type="ChEBI" id="CHEBI:28938"/>
        <dbReference type="ChEBI" id="CHEBI:30616"/>
        <dbReference type="ChEBI" id="CHEBI:37563"/>
        <dbReference type="ChEBI" id="CHEBI:43474"/>
        <dbReference type="ChEBI" id="CHEBI:46398"/>
        <dbReference type="ChEBI" id="CHEBI:456216"/>
    </reaction>
</comment>
<comment type="activity regulation">
    <text evidence="1">Allosterically activated by GTP, when glutamine is the substrate; GTP has no effect on the reaction when ammonia is the substrate. The allosteric effector GTP functions by stabilizing the protein conformation that binds the tetrahedral intermediate(s) formed during glutamine hydrolysis. Inhibited by the product CTP, via allosteric rather than competitive inhibition.</text>
</comment>
<comment type="pathway">
    <text evidence="1">Pyrimidine metabolism; CTP biosynthesis via de novo pathway; CTP from UDP: step 2/2.</text>
</comment>
<comment type="subunit">
    <text evidence="1">Homotetramer.</text>
</comment>
<comment type="miscellaneous">
    <text evidence="1">CTPSs have evolved a hybrid strategy for distinguishing between UTP and CTP. The overlapping regions of the product feedback inhibitory and substrate sites recognize a common feature in both compounds, the triphosphate moiety. To differentiate isosteric substrate and product pyrimidine rings, an additional pocket far from the expected kinase/ligase catalytic site, specifically recognizes the cytosine and ribose portions of the product inhibitor.</text>
</comment>
<comment type="similarity">
    <text evidence="1">Belongs to the CTP synthase family.</text>
</comment>
<keyword id="KW-0067">ATP-binding</keyword>
<keyword id="KW-0315">Glutamine amidotransferase</keyword>
<keyword id="KW-0436">Ligase</keyword>
<keyword id="KW-0460">Magnesium</keyword>
<keyword id="KW-0479">Metal-binding</keyword>
<keyword id="KW-0547">Nucleotide-binding</keyword>
<keyword id="KW-0665">Pyrimidine biosynthesis</keyword>
<protein>
    <recommendedName>
        <fullName evidence="1">CTP synthase</fullName>
        <ecNumber evidence="1">6.3.4.2</ecNumber>
    </recommendedName>
    <alternativeName>
        <fullName evidence="1">Cytidine 5'-triphosphate synthase</fullName>
    </alternativeName>
    <alternativeName>
        <fullName evidence="1">Cytidine triphosphate synthetase</fullName>
        <shortName evidence="1">CTP synthetase</shortName>
        <shortName evidence="1">CTPS</shortName>
    </alternativeName>
    <alternativeName>
        <fullName evidence="1">UTP--ammonia ligase</fullName>
    </alternativeName>
</protein>
<sequence length="545" mass="60074">MSKYIFVTGGVVSSLGKGAAGAALGALLEARGLKVTMLKLDPYINVDPGTMSPFQHGEVFVTADGAETDLDLGHYERFLSTRMGKRNNFTTGLVYQTVIEKERRGDYLGRTVQVIPHVTDEIKRRIRLGAADADVALVEIGGTVGDIESQPFLEAIRQMAVEEERGDTLFMHLTLVPYLASAGEMKTKPTQHSVRELRAIGIQPDVLLCRADRPIPADHRAKIGLFSNLPEKAVISAIDTDSIYRIPLLFHAQGLDDLVVQNLGLHLSAPDLSVWNGIINALEHPEGEVVIALVGKYVGLTESYKSLAEALLHAGLRARRSVRFLYVDAEDVETQGTEILAEADAILVPGGFGGRGTEGKIASIRHARERKVPYLGICLGMQLAVVEFARHRAGLMNANSTELDPQTPAPVITLMTEWSDPEGHKAYREEGGNLGGTMRLGEQECRLEPDSLAIQAYGQERIHERHRHRFEFNNRYREPLAMAGLRYTGFSADSELVEVVELPDHPWFLGCQFHPEFTSNPREGHPLFDAFMRAAIAQRERDGSS</sequence>
<feature type="chain" id="PRO_1000139364" description="CTP synthase">
    <location>
        <begin position="1"/>
        <end position="545"/>
    </location>
</feature>
<feature type="domain" description="Glutamine amidotransferase type-1" evidence="1">
    <location>
        <begin position="290"/>
        <end position="541"/>
    </location>
</feature>
<feature type="region of interest" description="Amidoligase domain" evidence="1">
    <location>
        <begin position="1"/>
        <end position="265"/>
    </location>
</feature>
<feature type="active site" description="Nucleophile; for glutamine hydrolysis" evidence="1">
    <location>
        <position position="378"/>
    </location>
</feature>
<feature type="active site" evidence="1">
    <location>
        <position position="514"/>
    </location>
</feature>
<feature type="active site" evidence="1">
    <location>
        <position position="516"/>
    </location>
</feature>
<feature type="binding site" evidence="1">
    <location>
        <position position="13"/>
    </location>
    <ligand>
        <name>CTP</name>
        <dbReference type="ChEBI" id="CHEBI:37563"/>
        <note>allosteric inhibitor</note>
    </ligand>
</feature>
<feature type="binding site" evidence="1">
    <location>
        <position position="13"/>
    </location>
    <ligand>
        <name>UTP</name>
        <dbReference type="ChEBI" id="CHEBI:46398"/>
    </ligand>
</feature>
<feature type="binding site" evidence="1">
    <location>
        <begin position="14"/>
        <end position="19"/>
    </location>
    <ligand>
        <name>ATP</name>
        <dbReference type="ChEBI" id="CHEBI:30616"/>
    </ligand>
</feature>
<feature type="binding site" evidence="1">
    <location>
        <position position="71"/>
    </location>
    <ligand>
        <name>ATP</name>
        <dbReference type="ChEBI" id="CHEBI:30616"/>
    </ligand>
</feature>
<feature type="binding site" evidence="1">
    <location>
        <position position="71"/>
    </location>
    <ligand>
        <name>Mg(2+)</name>
        <dbReference type="ChEBI" id="CHEBI:18420"/>
    </ligand>
</feature>
<feature type="binding site" evidence="1">
    <location>
        <position position="139"/>
    </location>
    <ligand>
        <name>Mg(2+)</name>
        <dbReference type="ChEBI" id="CHEBI:18420"/>
    </ligand>
</feature>
<feature type="binding site" evidence="1">
    <location>
        <begin position="146"/>
        <end position="148"/>
    </location>
    <ligand>
        <name>CTP</name>
        <dbReference type="ChEBI" id="CHEBI:37563"/>
        <note>allosteric inhibitor</note>
    </ligand>
</feature>
<feature type="binding site" evidence="1">
    <location>
        <begin position="186"/>
        <end position="191"/>
    </location>
    <ligand>
        <name>CTP</name>
        <dbReference type="ChEBI" id="CHEBI:37563"/>
        <note>allosteric inhibitor</note>
    </ligand>
</feature>
<feature type="binding site" evidence="1">
    <location>
        <begin position="186"/>
        <end position="191"/>
    </location>
    <ligand>
        <name>UTP</name>
        <dbReference type="ChEBI" id="CHEBI:46398"/>
    </ligand>
</feature>
<feature type="binding site" evidence="1">
    <location>
        <position position="222"/>
    </location>
    <ligand>
        <name>CTP</name>
        <dbReference type="ChEBI" id="CHEBI:37563"/>
        <note>allosteric inhibitor</note>
    </ligand>
</feature>
<feature type="binding site" evidence="1">
    <location>
        <position position="222"/>
    </location>
    <ligand>
        <name>UTP</name>
        <dbReference type="ChEBI" id="CHEBI:46398"/>
    </ligand>
</feature>
<feature type="binding site" evidence="1">
    <location>
        <position position="351"/>
    </location>
    <ligand>
        <name>L-glutamine</name>
        <dbReference type="ChEBI" id="CHEBI:58359"/>
    </ligand>
</feature>
<feature type="binding site" evidence="1">
    <location>
        <begin position="379"/>
        <end position="382"/>
    </location>
    <ligand>
        <name>L-glutamine</name>
        <dbReference type="ChEBI" id="CHEBI:58359"/>
    </ligand>
</feature>
<feature type="binding site" evidence="1">
    <location>
        <position position="402"/>
    </location>
    <ligand>
        <name>L-glutamine</name>
        <dbReference type="ChEBI" id="CHEBI:58359"/>
    </ligand>
</feature>
<feature type="binding site" evidence="1">
    <location>
        <position position="469"/>
    </location>
    <ligand>
        <name>L-glutamine</name>
        <dbReference type="ChEBI" id="CHEBI:58359"/>
    </ligand>
</feature>
<dbReference type="EC" id="6.3.4.2" evidence="1"/>
<dbReference type="EMBL" id="CP001132">
    <property type="protein sequence ID" value="ACH83219.1"/>
    <property type="molecule type" value="Genomic_DNA"/>
</dbReference>
<dbReference type="RefSeq" id="WP_012536390.1">
    <property type="nucleotide sequence ID" value="NC_011206.1"/>
</dbReference>
<dbReference type="SMR" id="B5EPM5"/>
<dbReference type="MEROPS" id="C26.964"/>
<dbReference type="KEGG" id="afe:Lferr_0973"/>
<dbReference type="eggNOG" id="COG0504">
    <property type="taxonomic scope" value="Bacteria"/>
</dbReference>
<dbReference type="HOGENOM" id="CLU_011675_5_0_6"/>
<dbReference type="UniPathway" id="UPA00159">
    <property type="reaction ID" value="UER00277"/>
</dbReference>
<dbReference type="GO" id="GO:0005829">
    <property type="term" value="C:cytosol"/>
    <property type="evidence" value="ECO:0007669"/>
    <property type="project" value="TreeGrafter"/>
</dbReference>
<dbReference type="GO" id="GO:0005524">
    <property type="term" value="F:ATP binding"/>
    <property type="evidence" value="ECO:0007669"/>
    <property type="project" value="UniProtKB-KW"/>
</dbReference>
<dbReference type="GO" id="GO:0003883">
    <property type="term" value="F:CTP synthase activity"/>
    <property type="evidence" value="ECO:0007669"/>
    <property type="project" value="UniProtKB-UniRule"/>
</dbReference>
<dbReference type="GO" id="GO:0004359">
    <property type="term" value="F:glutaminase activity"/>
    <property type="evidence" value="ECO:0007669"/>
    <property type="project" value="RHEA"/>
</dbReference>
<dbReference type="GO" id="GO:0042802">
    <property type="term" value="F:identical protein binding"/>
    <property type="evidence" value="ECO:0007669"/>
    <property type="project" value="TreeGrafter"/>
</dbReference>
<dbReference type="GO" id="GO:0046872">
    <property type="term" value="F:metal ion binding"/>
    <property type="evidence" value="ECO:0007669"/>
    <property type="project" value="UniProtKB-KW"/>
</dbReference>
<dbReference type="GO" id="GO:0044210">
    <property type="term" value="P:'de novo' CTP biosynthetic process"/>
    <property type="evidence" value="ECO:0007669"/>
    <property type="project" value="UniProtKB-UniRule"/>
</dbReference>
<dbReference type="GO" id="GO:0019856">
    <property type="term" value="P:pyrimidine nucleobase biosynthetic process"/>
    <property type="evidence" value="ECO:0007669"/>
    <property type="project" value="TreeGrafter"/>
</dbReference>
<dbReference type="CDD" id="cd03113">
    <property type="entry name" value="CTPS_N"/>
    <property type="match status" value="1"/>
</dbReference>
<dbReference type="CDD" id="cd01746">
    <property type="entry name" value="GATase1_CTP_Synthase"/>
    <property type="match status" value="1"/>
</dbReference>
<dbReference type="FunFam" id="3.40.50.300:FF:000009">
    <property type="entry name" value="CTP synthase"/>
    <property type="match status" value="1"/>
</dbReference>
<dbReference type="FunFam" id="3.40.50.880:FF:000002">
    <property type="entry name" value="CTP synthase"/>
    <property type="match status" value="1"/>
</dbReference>
<dbReference type="Gene3D" id="3.40.50.880">
    <property type="match status" value="1"/>
</dbReference>
<dbReference type="Gene3D" id="3.40.50.300">
    <property type="entry name" value="P-loop containing nucleotide triphosphate hydrolases"/>
    <property type="match status" value="1"/>
</dbReference>
<dbReference type="HAMAP" id="MF_01227">
    <property type="entry name" value="PyrG"/>
    <property type="match status" value="1"/>
</dbReference>
<dbReference type="InterPro" id="IPR029062">
    <property type="entry name" value="Class_I_gatase-like"/>
</dbReference>
<dbReference type="InterPro" id="IPR004468">
    <property type="entry name" value="CTP_synthase"/>
</dbReference>
<dbReference type="InterPro" id="IPR017456">
    <property type="entry name" value="CTP_synthase_N"/>
</dbReference>
<dbReference type="InterPro" id="IPR017926">
    <property type="entry name" value="GATASE"/>
</dbReference>
<dbReference type="InterPro" id="IPR033828">
    <property type="entry name" value="GATase1_CTP_Synthase"/>
</dbReference>
<dbReference type="InterPro" id="IPR027417">
    <property type="entry name" value="P-loop_NTPase"/>
</dbReference>
<dbReference type="NCBIfam" id="NF003792">
    <property type="entry name" value="PRK05380.1"/>
    <property type="match status" value="1"/>
</dbReference>
<dbReference type="NCBIfam" id="TIGR00337">
    <property type="entry name" value="PyrG"/>
    <property type="match status" value="1"/>
</dbReference>
<dbReference type="PANTHER" id="PTHR11550">
    <property type="entry name" value="CTP SYNTHASE"/>
    <property type="match status" value="1"/>
</dbReference>
<dbReference type="PANTHER" id="PTHR11550:SF0">
    <property type="entry name" value="CTP SYNTHASE-RELATED"/>
    <property type="match status" value="1"/>
</dbReference>
<dbReference type="Pfam" id="PF06418">
    <property type="entry name" value="CTP_synth_N"/>
    <property type="match status" value="1"/>
</dbReference>
<dbReference type="Pfam" id="PF00117">
    <property type="entry name" value="GATase"/>
    <property type="match status" value="1"/>
</dbReference>
<dbReference type="SUPFAM" id="SSF52317">
    <property type="entry name" value="Class I glutamine amidotransferase-like"/>
    <property type="match status" value="1"/>
</dbReference>
<dbReference type="SUPFAM" id="SSF52540">
    <property type="entry name" value="P-loop containing nucleoside triphosphate hydrolases"/>
    <property type="match status" value="1"/>
</dbReference>
<dbReference type="PROSITE" id="PS51273">
    <property type="entry name" value="GATASE_TYPE_1"/>
    <property type="match status" value="1"/>
</dbReference>
<evidence type="ECO:0000255" key="1">
    <source>
        <dbReference type="HAMAP-Rule" id="MF_01227"/>
    </source>
</evidence>
<reference key="1">
    <citation type="submission" date="2008-08" db="EMBL/GenBank/DDBJ databases">
        <title>Complete sequence of Acidithiobacillus ferrooxidans ATCC 53993.</title>
        <authorList>
            <person name="Lucas S."/>
            <person name="Copeland A."/>
            <person name="Lapidus A."/>
            <person name="Glavina del Rio T."/>
            <person name="Dalin E."/>
            <person name="Tice H."/>
            <person name="Bruce D."/>
            <person name="Goodwin L."/>
            <person name="Pitluck S."/>
            <person name="Sims D."/>
            <person name="Brettin T."/>
            <person name="Detter J.C."/>
            <person name="Han C."/>
            <person name="Kuske C.R."/>
            <person name="Larimer F."/>
            <person name="Land M."/>
            <person name="Hauser L."/>
            <person name="Kyrpides N."/>
            <person name="Lykidis A."/>
            <person name="Borole A.P."/>
        </authorList>
    </citation>
    <scope>NUCLEOTIDE SEQUENCE [LARGE SCALE GENOMIC DNA]</scope>
    <source>
        <strain>ATCC 53993 / BNL-5-31</strain>
    </source>
</reference>
<name>PYRG_ACIF5</name>
<accession>B5EPM5</accession>
<gene>
    <name evidence="1" type="primary">pyrG</name>
    <name type="ordered locus">Lferr_0973</name>
</gene>
<proteinExistence type="inferred from homology"/>